<organism>
    <name type="scientific">Xenopus tropicalis</name>
    <name type="common">Western clawed frog</name>
    <name type="synonym">Silurana tropicalis</name>
    <dbReference type="NCBI Taxonomy" id="8364"/>
    <lineage>
        <taxon>Eukaryota</taxon>
        <taxon>Metazoa</taxon>
        <taxon>Chordata</taxon>
        <taxon>Craniata</taxon>
        <taxon>Vertebrata</taxon>
        <taxon>Euteleostomi</taxon>
        <taxon>Amphibia</taxon>
        <taxon>Batrachia</taxon>
        <taxon>Anura</taxon>
        <taxon>Pipoidea</taxon>
        <taxon>Pipidae</taxon>
        <taxon>Xenopodinae</taxon>
        <taxon>Xenopus</taxon>
        <taxon>Silurana</taxon>
    </lineage>
</organism>
<reference key="1">
    <citation type="submission" date="2006-10" db="EMBL/GenBank/DDBJ databases">
        <authorList>
            <consortium name="Sanger Xenopus tropicalis EST/cDNA project"/>
        </authorList>
    </citation>
    <scope>NUCLEOTIDE SEQUENCE [LARGE SCALE MRNA]</scope>
    <source>
        <tissue>Egg</tissue>
    </source>
</reference>
<evidence type="ECO:0000250" key="1"/>
<evidence type="ECO:0000255" key="2"/>
<evidence type="ECO:0000305" key="3"/>
<protein>
    <recommendedName>
        <fullName>Putative sodium-coupled neutral amino acid transporter 8</fullName>
    </recommendedName>
    <alternativeName>
        <fullName>Solute carrier family 38 member 8</fullName>
    </alternativeName>
</protein>
<dbReference type="EMBL" id="CR760593">
    <property type="protein sequence ID" value="CAJ81310.1"/>
    <property type="molecule type" value="mRNA"/>
</dbReference>
<dbReference type="RefSeq" id="NP_001037900.1">
    <property type="nucleotide sequence ID" value="NM_001044435.1"/>
</dbReference>
<dbReference type="RefSeq" id="XP_017948568.1">
    <property type="nucleotide sequence ID" value="XM_018093079.2"/>
</dbReference>
<dbReference type="SMR" id="Q28I47"/>
<dbReference type="FunCoup" id="Q28I47">
    <property type="interactions" value="1"/>
</dbReference>
<dbReference type="STRING" id="8364.ENSXETP00000042821"/>
<dbReference type="GeneID" id="733502"/>
<dbReference type="KEGG" id="xtr:733502"/>
<dbReference type="AGR" id="Xenbase:XB-GENE-5766974"/>
<dbReference type="CTD" id="146167"/>
<dbReference type="Xenbase" id="XB-GENE-5766974">
    <property type="gene designation" value="slc38a8"/>
</dbReference>
<dbReference type="InParanoid" id="Q28I47"/>
<dbReference type="OMA" id="NQKISHW"/>
<dbReference type="OrthoDB" id="438545at2759"/>
<dbReference type="Proteomes" id="UP000008143">
    <property type="component" value="Chromosome 4"/>
</dbReference>
<dbReference type="Bgee" id="ENSXETG00000021709">
    <property type="expression patterns" value="Expressed in egg cell and 13 other cell types or tissues"/>
</dbReference>
<dbReference type="GO" id="GO:0016020">
    <property type="term" value="C:membrane"/>
    <property type="evidence" value="ECO:0007669"/>
    <property type="project" value="UniProtKB-SubCell"/>
</dbReference>
<dbReference type="GO" id="GO:0006865">
    <property type="term" value="P:amino acid transport"/>
    <property type="evidence" value="ECO:0007669"/>
    <property type="project" value="UniProtKB-KW"/>
</dbReference>
<dbReference type="GO" id="GO:0006814">
    <property type="term" value="P:sodium ion transport"/>
    <property type="evidence" value="ECO:0007669"/>
    <property type="project" value="UniProtKB-KW"/>
</dbReference>
<dbReference type="FunFam" id="1.20.1740.10:FF:000038">
    <property type="entry name" value="Putative sodium-coupled neutral amino acid transporter 7"/>
    <property type="match status" value="1"/>
</dbReference>
<dbReference type="InterPro" id="IPR013057">
    <property type="entry name" value="AA_transpt_TM"/>
</dbReference>
<dbReference type="PANTHER" id="PTHR22950">
    <property type="entry name" value="AMINO ACID TRANSPORTER"/>
    <property type="match status" value="1"/>
</dbReference>
<dbReference type="PANTHER" id="PTHR22950:SF226">
    <property type="entry name" value="SODIUM-COUPLED NEUTRAL AMINO ACID TRANSPORTER 8-RELATED"/>
    <property type="match status" value="1"/>
</dbReference>
<dbReference type="Pfam" id="PF01490">
    <property type="entry name" value="Aa_trans"/>
    <property type="match status" value="1"/>
</dbReference>
<comment type="function">
    <text evidence="1">Putative sodium-dependent amino acid/proton antiporter.</text>
</comment>
<comment type="subcellular location">
    <subcellularLocation>
        <location evidence="3">Membrane</location>
        <topology evidence="3">Multi-pass membrane protein</topology>
    </subcellularLocation>
</comment>
<comment type="similarity">
    <text evidence="3">Belongs to the amino acid/polyamine transporter 2 family.</text>
</comment>
<name>S38A8_XENTR</name>
<gene>
    <name type="primary">slc38a8</name>
    <name type="ORF">TEgg011p02.1</name>
</gene>
<keyword id="KW-0029">Amino-acid transport</keyword>
<keyword id="KW-0406">Ion transport</keyword>
<keyword id="KW-0472">Membrane</keyword>
<keyword id="KW-1185">Reference proteome</keyword>
<keyword id="KW-0915">Sodium</keyword>
<keyword id="KW-0739">Sodium transport</keyword>
<keyword id="KW-0812">Transmembrane</keyword>
<keyword id="KW-1133">Transmembrane helix</keyword>
<keyword id="KW-0813">Transport</keyword>
<sequence>MEELARESISLLGKSGLEGGTPSLSSMGAIFIMLKSALGAGLLNFPWAFNKVGGMHTAIMVELVSLIFLISGLVILGYASSLSKHSTYQGVVKDLCGPAIGKLCGICYIINLFMICVAFLRVVEDQLEKLCDSIHSNNTLYAMSEVSQSWYMDPRFAITVLCLVIILPLSIPKEISFQKYTSILGTLAACYLTVMIIIKYYVMEHPVLIKHEFSSNAASWASMFSVVPTICFGFQCHEACVTIYSSMKNKCLSNWAAVSVVSMLICLLIYSFTGIYGSLTFGEAVAADILMSYPGNDVAVIIARLLFTISIITIYPIILLLGRCVIQEAWLNHREKSLFVTLTYERCVRVVITVLWILVTLLIALFVPDISEVISVIGGISAFFIFIFPGLCLVCAVESEPMNTKAKSCLTAWGAISVVCGAFVFGQSTTIAVMEIIAKF</sequence>
<accession>Q28I47</accession>
<feature type="chain" id="PRO_0000319595" description="Putative sodium-coupled neutral amino acid transporter 8">
    <location>
        <begin position="1"/>
        <end position="440"/>
    </location>
</feature>
<feature type="transmembrane region" description="Helical" evidence="2">
    <location>
        <begin position="29"/>
        <end position="49"/>
    </location>
</feature>
<feature type="transmembrane region" description="Helical" evidence="2">
    <location>
        <begin position="58"/>
        <end position="78"/>
    </location>
</feature>
<feature type="transmembrane region" description="Helical" evidence="2">
    <location>
        <begin position="100"/>
        <end position="120"/>
    </location>
</feature>
<feature type="transmembrane region" description="Helical" evidence="2">
    <location>
        <begin position="156"/>
        <end position="176"/>
    </location>
</feature>
<feature type="transmembrane region" description="Helical" evidence="2">
    <location>
        <begin position="183"/>
        <end position="203"/>
    </location>
</feature>
<feature type="transmembrane region" description="Helical" evidence="2">
    <location>
        <begin position="223"/>
        <end position="243"/>
    </location>
</feature>
<feature type="transmembrane region" description="Helical" evidence="2">
    <location>
        <begin position="255"/>
        <end position="275"/>
    </location>
</feature>
<feature type="transmembrane region" description="Helical" evidence="2">
    <location>
        <begin position="300"/>
        <end position="320"/>
    </location>
</feature>
<feature type="transmembrane region" description="Helical" evidence="2">
    <location>
        <begin position="350"/>
        <end position="370"/>
    </location>
</feature>
<feature type="transmembrane region" description="Helical" evidence="2">
    <location>
        <begin position="373"/>
        <end position="393"/>
    </location>
</feature>
<feature type="transmembrane region" description="Helical" evidence="2">
    <location>
        <begin position="418"/>
        <end position="438"/>
    </location>
</feature>
<proteinExistence type="evidence at transcript level"/>